<sequence length="227" mass="24967">MENLKKMAGIKAAEFVSDGMVVGLGTGSTAYYFVEEIGRRIKEEGLQITAVTTSSVTSKQAEGLNIPLKSIDQVDFVDVTVDGADEVDSQFNGIKGGGGALLMEKIVATPSKEYIWVVDESKLVDKLGAFKLPVEVVQYGAEQIFRRFERAGYKPSFREKDGQRFVTDMQNFIIDLALDVIEDPIVFGQELDHVVGVVEHGLFNQMVDKVIVAGRDGVQILTSRKEK</sequence>
<keyword id="KW-0413">Isomerase</keyword>
<comment type="function">
    <text evidence="1">Catalyzes the reversible conversion of ribose-5-phosphate to ribulose 5-phosphate.</text>
</comment>
<comment type="catalytic activity">
    <reaction evidence="1">
        <text>aldehydo-D-ribose 5-phosphate = D-ribulose 5-phosphate</text>
        <dbReference type="Rhea" id="RHEA:14657"/>
        <dbReference type="ChEBI" id="CHEBI:58121"/>
        <dbReference type="ChEBI" id="CHEBI:58273"/>
        <dbReference type="EC" id="5.3.1.6"/>
    </reaction>
</comment>
<comment type="pathway">
    <text evidence="1">Carbohydrate degradation; pentose phosphate pathway; D-ribose 5-phosphate from D-ribulose 5-phosphate (non-oxidative stage): step 1/1.</text>
</comment>
<comment type="subunit">
    <text evidence="1">Homodimer.</text>
</comment>
<comment type="similarity">
    <text evidence="1">Belongs to the ribose 5-phosphate isomerase family.</text>
</comment>
<gene>
    <name evidence="1" type="primary">rpiA</name>
    <name type="ordered locus">SPH_0926</name>
</gene>
<name>RPIA_STRPI</name>
<protein>
    <recommendedName>
        <fullName evidence="1">Ribose-5-phosphate isomerase A</fullName>
        <ecNumber evidence="1">5.3.1.6</ecNumber>
    </recommendedName>
    <alternativeName>
        <fullName evidence="1">Phosphoriboisomerase A</fullName>
        <shortName evidence="1">PRI</shortName>
    </alternativeName>
</protein>
<evidence type="ECO:0000255" key="1">
    <source>
        <dbReference type="HAMAP-Rule" id="MF_00170"/>
    </source>
</evidence>
<feature type="chain" id="PRO_1000097699" description="Ribose-5-phosphate isomerase A">
    <location>
        <begin position="1"/>
        <end position="227"/>
    </location>
</feature>
<feature type="active site" description="Proton acceptor" evidence="1">
    <location>
        <position position="104"/>
    </location>
</feature>
<feature type="binding site" evidence="1">
    <location>
        <begin position="26"/>
        <end position="29"/>
    </location>
    <ligand>
        <name>substrate</name>
    </ligand>
</feature>
<feature type="binding site" evidence="1">
    <location>
        <begin position="82"/>
        <end position="85"/>
    </location>
    <ligand>
        <name>substrate</name>
    </ligand>
</feature>
<feature type="binding site" evidence="1">
    <location>
        <begin position="95"/>
        <end position="98"/>
    </location>
    <ligand>
        <name>substrate</name>
    </ligand>
</feature>
<feature type="binding site" evidence="1">
    <location>
        <position position="122"/>
    </location>
    <ligand>
        <name>substrate</name>
    </ligand>
</feature>
<accession>B1IAZ7</accession>
<reference key="1">
    <citation type="journal article" date="2010" name="Genome Biol.">
        <title>Structure and dynamics of the pan-genome of Streptococcus pneumoniae and closely related species.</title>
        <authorList>
            <person name="Donati C."/>
            <person name="Hiller N.L."/>
            <person name="Tettelin H."/>
            <person name="Muzzi A."/>
            <person name="Croucher N.J."/>
            <person name="Angiuoli S.V."/>
            <person name="Oggioni M."/>
            <person name="Dunning Hotopp J.C."/>
            <person name="Hu F.Z."/>
            <person name="Riley D.R."/>
            <person name="Covacci A."/>
            <person name="Mitchell T.J."/>
            <person name="Bentley S.D."/>
            <person name="Kilian M."/>
            <person name="Ehrlich G.D."/>
            <person name="Rappuoli R."/>
            <person name="Moxon E.R."/>
            <person name="Masignani V."/>
        </authorList>
    </citation>
    <scope>NUCLEOTIDE SEQUENCE [LARGE SCALE GENOMIC DNA]</scope>
    <source>
        <strain>Hungary19A-6</strain>
    </source>
</reference>
<dbReference type="EC" id="5.3.1.6" evidence="1"/>
<dbReference type="EMBL" id="CP000936">
    <property type="protein sequence ID" value="ACA37117.1"/>
    <property type="molecule type" value="Genomic_DNA"/>
</dbReference>
<dbReference type="RefSeq" id="WP_000429289.1">
    <property type="nucleotide sequence ID" value="NC_010380.1"/>
</dbReference>
<dbReference type="SMR" id="B1IAZ7"/>
<dbReference type="KEGG" id="spv:SPH_0926"/>
<dbReference type="HOGENOM" id="CLU_056590_1_0_9"/>
<dbReference type="UniPathway" id="UPA00115">
    <property type="reaction ID" value="UER00412"/>
</dbReference>
<dbReference type="Proteomes" id="UP000002163">
    <property type="component" value="Chromosome"/>
</dbReference>
<dbReference type="GO" id="GO:0004751">
    <property type="term" value="F:ribose-5-phosphate isomerase activity"/>
    <property type="evidence" value="ECO:0007669"/>
    <property type="project" value="UniProtKB-UniRule"/>
</dbReference>
<dbReference type="GO" id="GO:0009052">
    <property type="term" value="P:pentose-phosphate shunt, non-oxidative branch"/>
    <property type="evidence" value="ECO:0007669"/>
    <property type="project" value="UniProtKB-UniRule"/>
</dbReference>
<dbReference type="CDD" id="cd01398">
    <property type="entry name" value="RPI_A"/>
    <property type="match status" value="1"/>
</dbReference>
<dbReference type="FunFam" id="3.40.50.1360:FF:000001">
    <property type="entry name" value="Ribose-5-phosphate isomerase A"/>
    <property type="match status" value="1"/>
</dbReference>
<dbReference type="Gene3D" id="3.30.70.260">
    <property type="match status" value="1"/>
</dbReference>
<dbReference type="Gene3D" id="3.40.50.1360">
    <property type="match status" value="1"/>
</dbReference>
<dbReference type="HAMAP" id="MF_00170">
    <property type="entry name" value="Rib_5P_isom_A"/>
    <property type="match status" value="1"/>
</dbReference>
<dbReference type="InterPro" id="IPR037171">
    <property type="entry name" value="NagB/RpiA_transferase-like"/>
</dbReference>
<dbReference type="InterPro" id="IPR050262">
    <property type="entry name" value="Ribose-5P_isomerase"/>
</dbReference>
<dbReference type="InterPro" id="IPR020672">
    <property type="entry name" value="Ribose5P_isomerase_typA_subgr"/>
</dbReference>
<dbReference type="InterPro" id="IPR004788">
    <property type="entry name" value="Ribose5P_isomerase_type_A"/>
</dbReference>
<dbReference type="NCBIfam" id="NF001924">
    <property type="entry name" value="PRK00702.1"/>
    <property type="match status" value="1"/>
</dbReference>
<dbReference type="NCBIfam" id="TIGR00021">
    <property type="entry name" value="rpiA"/>
    <property type="match status" value="1"/>
</dbReference>
<dbReference type="PANTHER" id="PTHR43748">
    <property type="entry name" value="RIBOSE-5-PHOSPHATE ISOMERASE 3, CHLOROPLASTIC-RELATED"/>
    <property type="match status" value="1"/>
</dbReference>
<dbReference type="PANTHER" id="PTHR43748:SF3">
    <property type="entry name" value="RIBOSE-5-PHOSPHATE ISOMERASE 3, CHLOROPLASTIC-RELATED"/>
    <property type="match status" value="1"/>
</dbReference>
<dbReference type="Pfam" id="PF06026">
    <property type="entry name" value="Rib_5-P_isom_A"/>
    <property type="match status" value="1"/>
</dbReference>
<dbReference type="SUPFAM" id="SSF75445">
    <property type="entry name" value="D-ribose-5-phosphate isomerase (RpiA), lid domain"/>
    <property type="match status" value="1"/>
</dbReference>
<dbReference type="SUPFAM" id="SSF100950">
    <property type="entry name" value="NagB/RpiA/CoA transferase-like"/>
    <property type="match status" value="1"/>
</dbReference>
<proteinExistence type="inferred from homology"/>
<organism>
    <name type="scientific">Streptococcus pneumoniae (strain Hungary19A-6)</name>
    <dbReference type="NCBI Taxonomy" id="487214"/>
    <lineage>
        <taxon>Bacteria</taxon>
        <taxon>Bacillati</taxon>
        <taxon>Bacillota</taxon>
        <taxon>Bacilli</taxon>
        <taxon>Lactobacillales</taxon>
        <taxon>Streptococcaceae</taxon>
        <taxon>Streptococcus</taxon>
    </lineage>
</organism>